<reference key="1">
    <citation type="journal article" date="2000" name="J. Immunol.">
        <title>Variable expression of pathogenesis-related protein allergen in mountain cedar (Juniperus ashei) pollen.</title>
        <authorList>
            <person name="Midoro-horiuti T."/>
            <person name="Goldblum R.M."/>
            <person name="Kurosky A."/>
            <person name="Goetz D.W."/>
            <person name="Brooks E.G."/>
        </authorList>
    </citation>
    <scope>NUCLEOTIDE SEQUENCE [MRNA]</scope>
    <scope>PROTEIN SEQUENCE OF 27-70; 72-74; 84-112; 178-190; 192-193 AND 195</scope>
    <scope>TISSUE SPECIFICITY</scope>
    <scope>ALLERGEN</scope>
    <source>
        <tissue evidence="5">Pollen</tissue>
    </source>
</reference>
<reference key="2">
    <citation type="journal article" date="2000" name="Biophys. J.">
        <title>Homology modeling and characterization of IgE binding epitopes of mountain cedar allergen Jun a 3.</title>
        <authorList>
            <person name="Soman K.V."/>
            <person name="Midoro-Horiuti T."/>
            <person name="Ferreon J.C."/>
            <person name="Goldblum R.M."/>
            <person name="Brooks E.G."/>
            <person name="Kurosky A."/>
            <person name="Braun W."/>
            <person name="Schein C.H."/>
        </authorList>
    </citation>
    <scope>TISSUE SPECIFICITY</scope>
    <scope>ALLERGEN</scope>
    <scope>REGIONS</scope>
    <scope>3D-STRUCTURE MODELING</scope>
    <scope>CIRCULAR DICHROISM ANALYSIS</scope>
</reference>
<reference key="3">
    <citation type="journal article" date="2008" name="Biotechnol. Lett.">
        <title>The expression of a mountain cedar allergen comparing plant-viral apoplastic and yeast expression systems.</title>
        <authorList>
            <person name="Moehnke M.H."/>
            <person name="Midoro-Horiuti T."/>
            <person name="Goldblum R.M."/>
            <person name="Kearney C.M."/>
        </authorList>
    </citation>
    <scope>ALLERGEN</scope>
    <scope>BIOTECHNOLOGY</scope>
</reference>
<proteinExistence type="evidence at protein level"/>
<organism>
    <name type="scientific">Juniperus ashei</name>
    <name type="common">Ozark white cedar</name>
    <dbReference type="NCBI Taxonomy" id="13101"/>
    <lineage>
        <taxon>Eukaryota</taxon>
        <taxon>Viridiplantae</taxon>
        <taxon>Streptophyta</taxon>
        <taxon>Embryophyta</taxon>
        <taxon>Tracheophyta</taxon>
        <taxon>Spermatophyta</taxon>
        <taxon>Pinopsida</taxon>
        <taxon>Pinidae</taxon>
        <taxon>Conifers II</taxon>
        <taxon>Cupressales</taxon>
        <taxon>Cupressaceae</taxon>
        <taxon>Juniperus</taxon>
    </lineage>
</organism>
<keyword id="KW-0002">3D-structure</keyword>
<keyword id="KW-0020">Allergen</keyword>
<keyword id="KW-0903">Direct protein sequencing</keyword>
<keyword id="KW-1015">Disulfide bond</keyword>
<keyword id="KW-0568">Pathogenesis-related protein</keyword>
<keyword id="KW-0611">Plant defense</keyword>
<keyword id="KW-0732">Signal</keyword>
<protein>
    <recommendedName>
        <fullName evidence="6">Pathogenesis-related 5 protein Jun a 3.0101</fullName>
        <shortName evidence="6">PR-5 protein Jun a 3.0101</shortName>
    </recommendedName>
    <alternativeName>
        <fullName evidence="5">Pollen allergen Jun a 3</fullName>
    </alternativeName>
    <allergenName evidence="6">Jun a 3.0101</allergenName>
</protein>
<feature type="signal peptide" evidence="2">
    <location>
        <begin position="1"/>
        <end position="26"/>
    </location>
</feature>
<feature type="chain" id="PRO_0000034030" description="Pathogenesis-related 5 protein Jun a 3.0101" evidence="7">
    <location>
        <begin position="27"/>
        <end position="225"/>
    </location>
</feature>
<feature type="region of interest" description="IgE-binding" evidence="3">
    <location>
        <begin position="146"/>
        <end position="157"/>
    </location>
</feature>
<feature type="region of interest" description="IgE-binding" evidence="3">
    <location>
        <begin position="158"/>
        <end position="170"/>
    </location>
</feature>
<feature type="region of interest" description="IgE-binding" evidence="3">
    <location>
        <begin position="178"/>
        <end position="191"/>
    </location>
</feature>
<feature type="disulfide bond" evidence="1">
    <location>
        <begin position="35"/>
        <end position="224"/>
    </location>
</feature>
<feature type="disulfide bond" evidence="1">
    <location>
        <begin position="76"/>
        <end position="86"/>
    </location>
</feature>
<feature type="disulfide bond" evidence="1">
    <location>
        <begin position="91"/>
        <end position="97"/>
    </location>
</feature>
<feature type="disulfide bond" evidence="1">
    <location>
        <begin position="139"/>
        <end position="213"/>
    </location>
</feature>
<feature type="disulfide bond" evidence="1">
    <location>
        <begin position="144"/>
        <end position="197"/>
    </location>
</feature>
<feature type="disulfide bond" evidence="1">
    <location>
        <begin position="152"/>
        <end position="162"/>
    </location>
</feature>
<feature type="disulfide bond" evidence="1">
    <location>
        <begin position="166"/>
        <end position="175"/>
    </location>
</feature>
<feature type="disulfide bond" evidence="1">
    <location>
        <begin position="176"/>
        <end position="184"/>
    </location>
</feature>
<feature type="sequence conflict" description="In Ref. 1; AA sequence." evidence="6" ref="1">
    <original>T</original>
    <variation>R</variation>
    <location>
        <position position="58"/>
    </location>
</feature>
<feature type="strand" evidence="8">
    <location>
        <begin position="27"/>
        <end position="33"/>
    </location>
</feature>
<feature type="strand" evidence="8">
    <location>
        <begin position="35"/>
        <end position="37"/>
    </location>
</feature>
<feature type="strand" evidence="8">
    <location>
        <begin position="39"/>
        <end position="44"/>
    </location>
</feature>
<feature type="strand" evidence="8">
    <location>
        <begin position="47"/>
        <end position="51"/>
    </location>
</feature>
<feature type="strand" evidence="8">
    <location>
        <begin position="56"/>
        <end position="61"/>
    </location>
</feature>
<feature type="strand" evidence="8">
    <location>
        <begin position="67"/>
        <end position="78"/>
    </location>
</feature>
<feature type="strand" evidence="8">
    <location>
        <begin position="82"/>
        <end position="89"/>
    </location>
</feature>
<feature type="strand" evidence="8">
    <location>
        <begin position="94"/>
        <end position="96"/>
    </location>
</feature>
<feature type="strand" evidence="8">
    <location>
        <begin position="107"/>
        <end position="121"/>
    </location>
</feature>
<feature type="strand" evidence="8">
    <location>
        <begin position="126"/>
        <end position="128"/>
    </location>
</feature>
<feature type="strand" evidence="8">
    <location>
        <begin position="130"/>
        <end position="136"/>
    </location>
</feature>
<feature type="helix" evidence="8">
    <location>
        <begin position="148"/>
        <end position="150"/>
    </location>
</feature>
<feature type="helix" evidence="8">
    <location>
        <begin position="154"/>
        <end position="156"/>
    </location>
</feature>
<feature type="helix" evidence="8">
    <location>
        <begin position="165"/>
        <end position="169"/>
    </location>
</feature>
<feature type="helix" evidence="8">
    <location>
        <begin position="172"/>
        <end position="175"/>
    </location>
</feature>
<feature type="helix" evidence="8">
    <location>
        <begin position="178"/>
        <end position="180"/>
    </location>
</feature>
<feature type="helix" evidence="8">
    <location>
        <begin position="188"/>
        <end position="196"/>
    </location>
</feature>
<feature type="strand" evidence="8">
    <location>
        <begin position="211"/>
        <end position="213"/>
    </location>
</feature>
<feature type="strand" evidence="8">
    <location>
        <begin position="219"/>
        <end position="224"/>
    </location>
</feature>
<sequence length="225" mass="23720">MARVSELAFLLAATLAISLHMQEAGVVKFDIKNQCGYTVWAAGLPGGGKRLDQGQTWTVNLAAGTASARFWGRTGCTFDASGKGSCQTGDCGGQLSCTVSGAVPATLAEYTQSDQDYYDVSLVDGFNIPLAINPTNAQCTAPACKADINAVCPSELKVDGGCNSACNVFKTDQYCCRNAYVDNCPATNYSKIFKNQCPQAYSYAKDDTATFACASGTDYSIVFCP</sequence>
<evidence type="ECO:0000255" key="1">
    <source>
        <dbReference type="PROSITE-ProRule" id="PRU00699"/>
    </source>
</evidence>
<evidence type="ECO:0000269" key="2">
    <source>
    </source>
</evidence>
<evidence type="ECO:0000269" key="3">
    <source>
    </source>
</evidence>
<evidence type="ECO:0000269" key="4">
    <source>
    </source>
</evidence>
<evidence type="ECO:0000303" key="5">
    <source>
    </source>
</evidence>
<evidence type="ECO:0000305" key="6"/>
<evidence type="ECO:0000305" key="7">
    <source>
    </source>
</evidence>
<evidence type="ECO:0007829" key="8">
    <source>
        <dbReference type="PDB" id="7P20"/>
    </source>
</evidence>
<accession>P81295</accession>
<comment type="tissue specificity">
    <text evidence="2 3">Expressed in pollen (at protein level).</text>
</comment>
<comment type="allergen">
    <text evidence="2 3 4">Causes an allergic reaction in human. Binds to IgE in patients allergic to the pollen of cedar tree (PubMed:10657673, PubMed:10969020, PubMed:18270658). Native protein binds to IgE in 43% of the 14 patients and in 33% of the 36 patients tested allergic to the pollen of mountain cedar or Japanese cedar, respectively (PubMed:10657673). Recombinant protein binds to IgE of patients allergic to mountain cedar pollen (PubMed:18270658).</text>
</comment>
<comment type="biotechnology">
    <text evidence="4">Extracting this recombinant allergen by vacuum infiltration from the plant (Nicotiana benthamiana) apoplast via tobacco mosaic virus vector could be useful in diagnostic and/or immunotherapeutic strategies for cedar allergy as it is a more convenient and inexpensive method than expression in the yeast (Pichia pastoris) secretion system.</text>
</comment>
<comment type="similarity">
    <text evidence="1">Belongs to the thaumatin family.</text>
</comment>
<dbReference type="EMBL" id="AF121776">
    <property type="protein sequence ID" value="AAF31759.1"/>
    <property type="molecule type" value="mRNA"/>
</dbReference>
<dbReference type="PDB" id="7P20">
    <property type="method" value="X-ray"/>
    <property type="resolution" value="1.40 A"/>
    <property type="chains" value="A=25-225"/>
</dbReference>
<dbReference type="PDBsum" id="7P20"/>
<dbReference type="SMR" id="P81295"/>
<dbReference type="Allergome" id="3340">
    <property type="allergen name" value="Jun a 3.0101"/>
</dbReference>
<dbReference type="Allergome" id="429">
    <property type="allergen name" value="Jun a 3"/>
</dbReference>
<dbReference type="GO" id="GO:0006952">
    <property type="term" value="P:defense response"/>
    <property type="evidence" value="ECO:0007669"/>
    <property type="project" value="UniProtKB-KW"/>
</dbReference>
<dbReference type="FunFam" id="2.60.110.10:FF:000003">
    <property type="entry name" value="Thaumatin I"/>
    <property type="match status" value="1"/>
</dbReference>
<dbReference type="Gene3D" id="2.60.110.10">
    <property type="entry name" value="Thaumatin"/>
    <property type="match status" value="1"/>
</dbReference>
<dbReference type="InterPro" id="IPR037176">
    <property type="entry name" value="Osmotin/thaumatin-like_sf"/>
</dbReference>
<dbReference type="InterPro" id="IPR001938">
    <property type="entry name" value="Thaumatin"/>
</dbReference>
<dbReference type="InterPro" id="IPR017949">
    <property type="entry name" value="Thaumatin_CS"/>
</dbReference>
<dbReference type="PANTHER" id="PTHR31048">
    <property type="entry name" value="OS03G0233200 PROTEIN"/>
    <property type="match status" value="1"/>
</dbReference>
<dbReference type="Pfam" id="PF00314">
    <property type="entry name" value="Thaumatin"/>
    <property type="match status" value="1"/>
</dbReference>
<dbReference type="PIRSF" id="PIRSF002703">
    <property type="entry name" value="Thaumatin"/>
    <property type="match status" value="1"/>
</dbReference>
<dbReference type="PRINTS" id="PR00347">
    <property type="entry name" value="THAUMATIN"/>
</dbReference>
<dbReference type="SMART" id="SM00205">
    <property type="entry name" value="THN"/>
    <property type="match status" value="1"/>
</dbReference>
<dbReference type="SUPFAM" id="SSF49870">
    <property type="entry name" value="Osmotin, thaumatin-like protein"/>
    <property type="match status" value="1"/>
</dbReference>
<dbReference type="PROSITE" id="PS00316">
    <property type="entry name" value="THAUMATIN_1"/>
    <property type="match status" value="1"/>
</dbReference>
<dbReference type="PROSITE" id="PS51367">
    <property type="entry name" value="THAUMATIN_2"/>
    <property type="match status" value="1"/>
</dbReference>
<name>PRR3_JUNAS</name>